<reference key="1">
    <citation type="journal article" date="2005" name="Proc. Natl. Acad. Sci. U.S.A.">
        <title>Genome analysis of multiple pathogenic isolates of Streptococcus agalactiae: implications for the microbial 'pan-genome'.</title>
        <authorList>
            <person name="Tettelin H."/>
            <person name="Masignani V."/>
            <person name="Cieslewicz M.J."/>
            <person name="Donati C."/>
            <person name="Medini D."/>
            <person name="Ward N.L."/>
            <person name="Angiuoli S.V."/>
            <person name="Crabtree J."/>
            <person name="Jones A.L."/>
            <person name="Durkin A.S."/>
            <person name="DeBoy R.T."/>
            <person name="Davidsen T.M."/>
            <person name="Mora M."/>
            <person name="Scarselli M."/>
            <person name="Margarit y Ros I."/>
            <person name="Peterson J.D."/>
            <person name="Hauser C.R."/>
            <person name="Sundaram J.P."/>
            <person name="Nelson W.C."/>
            <person name="Madupu R."/>
            <person name="Brinkac L.M."/>
            <person name="Dodson R.J."/>
            <person name="Rosovitz M.J."/>
            <person name="Sullivan S.A."/>
            <person name="Daugherty S.C."/>
            <person name="Haft D.H."/>
            <person name="Selengut J."/>
            <person name="Gwinn M.L."/>
            <person name="Zhou L."/>
            <person name="Zafar N."/>
            <person name="Khouri H."/>
            <person name="Radune D."/>
            <person name="Dimitrov G."/>
            <person name="Watkins K."/>
            <person name="O'Connor K.J."/>
            <person name="Smith S."/>
            <person name="Utterback T.R."/>
            <person name="White O."/>
            <person name="Rubens C.E."/>
            <person name="Grandi G."/>
            <person name="Madoff L.C."/>
            <person name="Kasper D.L."/>
            <person name="Telford J.L."/>
            <person name="Wessels M.R."/>
            <person name="Rappuoli R."/>
            <person name="Fraser C.M."/>
        </authorList>
    </citation>
    <scope>NUCLEOTIDE SEQUENCE [LARGE SCALE GENOMIC DNA]</scope>
    <source>
        <strain>ATCC 27591 / A909 / CDC SS700</strain>
    </source>
</reference>
<accession>Q3JZB3</accession>
<name>RS12_STRA1</name>
<sequence length="137" mass="15107">MPTINQLVRKPRKSKVEKSDSPALNIGYNSHRKVHTKLSAPQKRGVATRVGTMTPKKPNSALRKFARVRLSNLIEVTAYIPGIGHNLQEHSVVLIRGGRVKDLPGVRYHIVRGALDTAGVADRKQGRSKYGAKRPKG</sequence>
<gene>
    <name evidence="2" type="primary">rpsL</name>
    <name type="ordered locus">SAK_1793</name>
</gene>
<protein>
    <recommendedName>
        <fullName evidence="2">Small ribosomal subunit protein uS12</fullName>
    </recommendedName>
    <alternativeName>
        <fullName evidence="4">30S ribosomal protein S12</fullName>
    </alternativeName>
</protein>
<evidence type="ECO:0000250" key="1"/>
<evidence type="ECO:0000255" key="2">
    <source>
        <dbReference type="HAMAP-Rule" id="MF_00403"/>
    </source>
</evidence>
<evidence type="ECO:0000256" key="3">
    <source>
        <dbReference type="SAM" id="MobiDB-lite"/>
    </source>
</evidence>
<evidence type="ECO:0000305" key="4"/>
<keyword id="KW-0488">Methylation</keyword>
<keyword id="KW-0687">Ribonucleoprotein</keyword>
<keyword id="KW-0689">Ribosomal protein</keyword>
<keyword id="KW-0694">RNA-binding</keyword>
<keyword id="KW-0699">rRNA-binding</keyword>
<keyword id="KW-0820">tRNA-binding</keyword>
<proteinExistence type="inferred from homology"/>
<dbReference type="EMBL" id="CP000114">
    <property type="protein sequence ID" value="ABA46012.1"/>
    <property type="molecule type" value="Genomic_DNA"/>
</dbReference>
<dbReference type="RefSeq" id="WP_001142328.1">
    <property type="nucleotide sequence ID" value="NC_007432.1"/>
</dbReference>
<dbReference type="SMR" id="Q3JZB3"/>
<dbReference type="GeneID" id="66886609"/>
<dbReference type="KEGG" id="sak:SAK_1793"/>
<dbReference type="HOGENOM" id="CLU_104295_1_2_9"/>
<dbReference type="GO" id="GO:0015935">
    <property type="term" value="C:small ribosomal subunit"/>
    <property type="evidence" value="ECO:0007669"/>
    <property type="project" value="InterPro"/>
</dbReference>
<dbReference type="GO" id="GO:0019843">
    <property type="term" value="F:rRNA binding"/>
    <property type="evidence" value="ECO:0007669"/>
    <property type="project" value="UniProtKB-UniRule"/>
</dbReference>
<dbReference type="GO" id="GO:0003735">
    <property type="term" value="F:structural constituent of ribosome"/>
    <property type="evidence" value="ECO:0007669"/>
    <property type="project" value="InterPro"/>
</dbReference>
<dbReference type="GO" id="GO:0000049">
    <property type="term" value="F:tRNA binding"/>
    <property type="evidence" value="ECO:0007669"/>
    <property type="project" value="UniProtKB-UniRule"/>
</dbReference>
<dbReference type="GO" id="GO:0006412">
    <property type="term" value="P:translation"/>
    <property type="evidence" value="ECO:0007669"/>
    <property type="project" value="UniProtKB-UniRule"/>
</dbReference>
<dbReference type="CDD" id="cd03368">
    <property type="entry name" value="Ribosomal_S12"/>
    <property type="match status" value="1"/>
</dbReference>
<dbReference type="FunFam" id="2.40.50.140:FF:000001">
    <property type="entry name" value="30S ribosomal protein S12"/>
    <property type="match status" value="1"/>
</dbReference>
<dbReference type="Gene3D" id="2.40.50.140">
    <property type="entry name" value="Nucleic acid-binding proteins"/>
    <property type="match status" value="1"/>
</dbReference>
<dbReference type="HAMAP" id="MF_00403_B">
    <property type="entry name" value="Ribosomal_uS12_B"/>
    <property type="match status" value="1"/>
</dbReference>
<dbReference type="InterPro" id="IPR012340">
    <property type="entry name" value="NA-bd_OB-fold"/>
</dbReference>
<dbReference type="InterPro" id="IPR006032">
    <property type="entry name" value="Ribosomal_uS12"/>
</dbReference>
<dbReference type="InterPro" id="IPR005679">
    <property type="entry name" value="Ribosomal_uS12_bac"/>
</dbReference>
<dbReference type="NCBIfam" id="TIGR00981">
    <property type="entry name" value="rpsL_bact"/>
    <property type="match status" value="1"/>
</dbReference>
<dbReference type="PANTHER" id="PTHR11652">
    <property type="entry name" value="30S RIBOSOMAL PROTEIN S12 FAMILY MEMBER"/>
    <property type="match status" value="1"/>
</dbReference>
<dbReference type="Pfam" id="PF00164">
    <property type="entry name" value="Ribosom_S12_S23"/>
    <property type="match status" value="1"/>
</dbReference>
<dbReference type="PIRSF" id="PIRSF002133">
    <property type="entry name" value="Ribosomal_S12/S23"/>
    <property type="match status" value="1"/>
</dbReference>
<dbReference type="PRINTS" id="PR01034">
    <property type="entry name" value="RIBOSOMALS12"/>
</dbReference>
<dbReference type="SUPFAM" id="SSF50249">
    <property type="entry name" value="Nucleic acid-binding proteins"/>
    <property type="match status" value="1"/>
</dbReference>
<dbReference type="PROSITE" id="PS00055">
    <property type="entry name" value="RIBOSOMAL_S12"/>
    <property type="match status" value="1"/>
</dbReference>
<comment type="function">
    <text evidence="2">With S4 and S5 plays an important role in translational accuracy.</text>
</comment>
<comment type="function">
    <text evidence="2">Interacts with and stabilizes bases of the 16S rRNA that are involved in tRNA selection in the A site and with the mRNA backbone. Located at the interface of the 30S and 50S subunits, it traverses the body of the 30S subunit contacting proteins on the other side and probably holding the rRNA structure together. The combined cluster of proteins S8, S12 and S17 appears to hold together the shoulder and platform of the 30S subunit.</text>
</comment>
<comment type="subunit">
    <text evidence="2">Part of the 30S ribosomal subunit. Contacts proteins S8 and S17. May interact with IF1 in the 30S initiation complex.</text>
</comment>
<comment type="similarity">
    <text evidence="2">Belongs to the universal ribosomal protein uS12 family.</text>
</comment>
<organism>
    <name type="scientific">Streptococcus agalactiae serotype Ia (strain ATCC 27591 / A909 / CDC SS700)</name>
    <dbReference type="NCBI Taxonomy" id="205921"/>
    <lineage>
        <taxon>Bacteria</taxon>
        <taxon>Bacillati</taxon>
        <taxon>Bacillota</taxon>
        <taxon>Bacilli</taxon>
        <taxon>Lactobacillales</taxon>
        <taxon>Streptococcaceae</taxon>
        <taxon>Streptococcus</taxon>
    </lineage>
</organism>
<feature type="chain" id="PRO_0000226418" description="Small ribosomal subunit protein uS12">
    <location>
        <begin position="1"/>
        <end position="137"/>
    </location>
</feature>
<feature type="region of interest" description="Disordered" evidence="3">
    <location>
        <begin position="1"/>
        <end position="21"/>
    </location>
</feature>
<feature type="region of interest" description="Disordered" evidence="3">
    <location>
        <begin position="36"/>
        <end position="57"/>
    </location>
</feature>
<feature type="modified residue" description="3-methylthioaspartic acid" evidence="1">
    <location>
        <position position="102"/>
    </location>
</feature>